<evidence type="ECO:0000255" key="1">
    <source>
        <dbReference type="HAMAP-Rule" id="MF_00108"/>
    </source>
</evidence>
<sequence>MHVLIPAAGSGRRMEAGKNKLLIDLEGESLIYWTLKSVFSASLVSWVGIIGQPNDKKKLLNSVKKFSNEIEWINGGNTRQESVFNGLNSLPSNAEKVLIHDGARCLINPDLINKCALELEENDAVILATKVTDTIKIVDNEGYIQQTPNRQNLWAAQTPQGFLVKKLREAHEMAIEKNWKVTDDASLFEMLNWQVRIIEGNSSNIKITSPLDLQIAKLFLKDY</sequence>
<keyword id="KW-0414">Isoprene biosynthesis</keyword>
<keyword id="KW-0548">Nucleotidyltransferase</keyword>
<keyword id="KW-0808">Transferase</keyword>
<feature type="chain" id="PRO_1000022936" description="2-C-methyl-D-erythritol 4-phosphate cytidylyltransferase">
    <location>
        <begin position="1"/>
        <end position="223"/>
    </location>
</feature>
<feature type="site" description="Transition state stabilizer" evidence="1">
    <location>
        <position position="13"/>
    </location>
</feature>
<feature type="site" description="Transition state stabilizer" evidence="1">
    <location>
        <position position="20"/>
    </location>
</feature>
<feature type="site" description="Positions MEP for the nucleophilic attack" evidence="1">
    <location>
        <position position="150"/>
    </location>
</feature>
<feature type="site" description="Positions MEP for the nucleophilic attack" evidence="1">
    <location>
        <position position="206"/>
    </location>
</feature>
<accession>A2BVB5</accession>
<proteinExistence type="inferred from homology"/>
<protein>
    <recommendedName>
        <fullName evidence="1">2-C-methyl-D-erythritol 4-phosphate cytidylyltransferase</fullName>
        <ecNumber evidence="1">2.7.7.60</ecNumber>
    </recommendedName>
    <alternativeName>
        <fullName evidence="1">4-diphosphocytidyl-2C-methyl-D-erythritol synthase</fullName>
    </alternativeName>
    <alternativeName>
        <fullName evidence="1">MEP cytidylyltransferase</fullName>
        <shortName evidence="1">MCT</shortName>
    </alternativeName>
</protein>
<name>ISPD_PROM5</name>
<gene>
    <name evidence="1" type="primary">ispD</name>
    <name type="ordered locus">P9515_05171</name>
</gene>
<reference key="1">
    <citation type="journal article" date="2007" name="PLoS Genet.">
        <title>Patterns and implications of gene gain and loss in the evolution of Prochlorococcus.</title>
        <authorList>
            <person name="Kettler G.C."/>
            <person name="Martiny A.C."/>
            <person name="Huang K."/>
            <person name="Zucker J."/>
            <person name="Coleman M.L."/>
            <person name="Rodrigue S."/>
            <person name="Chen F."/>
            <person name="Lapidus A."/>
            <person name="Ferriera S."/>
            <person name="Johnson J."/>
            <person name="Steglich C."/>
            <person name="Church G.M."/>
            <person name="Richardson P."/>
            <person name="Chisholm S.W."/>
        </authorList>
    </citation>
    <scope>NUCLEOTIDE SEQUENCE [LARGE SCALE GENOMIC DNA]</scope>
    <source>
        <strain>MIT 9515</strain>
    </source>
</reference>
<comment type="function">
    <text evidence="1">Catalyzes the formation of 4-diphosphocytidyl-2-C-methyl-D-erythritol from CTP and 2-C-methyl-D-erythritol 4-phosphate (MEP).</text>
</comment>
<comment type="catalytic activity">
    <reaction evidence="1">
        <text>2-C-methyl-D-erythritol 4-phosphate + CTP + H(+) = 4-CDP-2-C-methyl-D-erythritol + diphosphate</text>
        <dbReference type="Rhea" id="RHEA:13429"/>
        <dbReference type="ChEBI" id="CHEBI:15378"/>
        <dbReference type="ChEBI" id="CHEBI:33019"/>
        <dbReference type="ChEBI" id="CHEBI:37563"/>
        <dbReference type="ChEBI" id="CHEBI:57823"/>
        <dbReference type="ChEBI" id="CHEBI:58262"/>
        <dbReference type="EC" id="2.7.7.60"/>
    </reaction>
</comment>
<comment type="pathway">
    <text evidence="1">Isoprenoid biosynthesis; isopentenyl diphosphate biosynthesis via DXP pathway; isopentenyl diphosphate from 1-deoxy-D-xylulose 5-phosphate: step 2/6.</text>
</comment>
<comment type="similarity">
    <text evidence="1">Belongs to the IspD/TarI cytidylyltransferase family. IspD subfamily.</text>
</comment>
<dbReference type="EC" id="2.7.7.60" evidence="1"/>
<dbReference type="EMBL" id="CP000552">
    <property type="protein sequence ID" value="ABM71726.1"/>
    <property type="molecule type" value="Genomic_DNA"/>
</dbReference>
<dbReference type="RefSeq" id="WP_011819834.1">
    <property type="nucleotide sequence ID" value="NC_008817.1"/>
</dbReference>
<dbReference type="SMR" id="A2BVB5"/>
<dbReference type="STRING" id="167542.P9515_05171"/>
<dbReference type="GeneID" id="60201667"/>
<dbReference type="KEGG" id="pmc:P9515_05171"/>
<dbReference type="eggNOG" id="COG1211">
    <property type="taxonomic scope" value="Bacteria"/>
</dbReference>
<dbReference type="HOGENOM" id="CLU_061281_1_0_3"/>
<dbReference type="OrthoDB" id="9806837at2"/>
<dbReference type="UniPathway" id="UPA00056">
    <property type="reaction ID" value="UER00093"/>
</dbReference>
<dbReference type="Proteomes" id="UP000001589">
    <property type="component" value="Chromosome"/>
</dbReference>
<dbReference type="GO" id="GO:0050518">
    <property type="term" value="F:2-C-methyl-D-erythritol 4-phosphate cytidylyltransferase activity"/>
    <property type="evidence" value="ECO:0007669"/>
    <property type="project" value="UniProtKB-UniRule"/>
</dbReference>
<dbReference type="GO" id="GO:0019288">
    <property type="term" value="P:isopentenyl diphosphate biosynthetic process, methylerythritol 4-phosphate pathway"/>
    <property type="evidence" value="ECO:0007669"/>
    <property type="project" value="UniProtKB-UniRule"/>
</dbReference>
<dbReference type="CDD" id="cd02516">
    <property type="entry name" value="CDP-ME_synthetase"/>
    <property type="match status" value="1"/>
</dbReference>
<dbReference type="FunFam" id="3.90.550.10:FF:000003">
    <property type="entry name" value="2-C-methyl-D-erythritol 4-phosphate cytidylyltransferase"/>
    <property type="match status" value="1"/>
</dbReference>
<dbReference type="Gene3D" id="3.90.550.10">
    <property type="entry name" value="Spore Coat Polysaccharide Biosynthesis Protein SpsA, Chain A"/>
    <property type="match status" value="1"/>
</dbReference>
<dbReference type="HAMAP" id="MF_00108">
    <property type="entry name" value="IspD"/>
    <property type="match status" value="1"/>
</dbReference>
<dbReference type="InterPro" id="IPR001228">
    <property type="entry name" value="IspD"/>
</dbReference>
<dbReference type="InterPro" id="IPR034683">
    <property type="entry name" value="IspD/TarI"/>
</dbReference>
<dbReference type="InterPro" id="IPR050088">
    <property type="entry name" value="IspD/TarI_cytidylyltransf_bact"/>
</dbReference>
<dbReference type="InterPro" id="IPR018294">
    <property type="entry name" value="ISPD_synthase_CS"/>
</dbReference>
<dbReference type="InterPro" id="IPR029044">
    <property type="entry name" value="Nucleotide-diphossugar_trans"/>
</dbReference>
<dbReference type="NCBIfam" id="TIGR00453">
    <property type="entry name" value="ispD"/>
    <property type="match status" value="1"/>
</dbReference>
<dbReference type="PANTHER" id="PTHR32125">
    <property type="entry name" value="2-C-METHYL-D-ERYTHRITOL 4-PHOSPHATE CYTIDYLYLTRANSFERASE, CHLOROPLASTIC"/>
    <property type="match status" value="1"/>
</dbReference>
<dbReference type="PANTHER" id="PTHR32125:SF4">
    <property type="entry name" value="2-C-METHYL-D-ERYTHRITOL 4-PHOSPHATE CYTIDYLYLTRANSFERASE, CHLOROPLASTIC"/>
    <property type="match status" value="1"/>
</dbReference>
<dbReference type="Pfam" id="PF01128">
    <property type="entry name" value="IspD"/>
    <property type="match status" value="1"/>
</dbReference>
<dbReference type="SUPFAM" id="SSF53448">
    <property type="entry name" value="Nucleotide-diphospho-sugar transferases"/>
    <property type="match status" value="1"/>
</dbReference>
<dbReference type="PROSITE" id="PS01295">
    <property type="entry name" value="ISPD"/>
    <property type="match status" value="1"/>
</dbReference>
<organism>
    <name type="scientific">Prochlorococcus marinus (strain MIT 9515)</name>
    <dbReference type="NCBI Taxonomy" id="167542"/>
    <lineage>
        <taxon>Bacteria</taxon>
        <taxon>Bacillati</taxon>
        <taxon>Cyanobacteriota</taxon>
        <taxon>Cyanophyceae</taxon>
        <taxon>Synechococcales</taxon>
        <taxon>Prochlorococcaceae</taxon>
        <taxon>Prochlorococcus</taxon>
    </lineage>
</organism>